<evidence type="ECO:0000250" key="1">
    <source>
        <dbReference type="UniProtKB" id="P9WGL5"/>
    </source>
</evidence>
<evidence type="ECO:0000255" key="2"/>
<evidence type="ECO:0000255" key="3">
    <source>
        <dbReference type="PROSITE-ProRule" id="PRU00107"/>
    </source>
</evidence>
<evidence type="ECO:0000269" key="4">
    <source>
    </source>
</evidence>
<evidence type="ECO:0000269" key="5">
    <source>
    </source>
</evidence>
<evidence type="ECO:0000303" key="6">
    <source>
    </source>
</evidence>
<evidence type="ECO:0000305" key="7"/>
<evidence type="ECO:0000312" key="8">
    <source>
        <dbReference type="EMBL" id="ABK70703.1"/>
    </source>
</evidence>
<evidence type="ECO:0000312" key="9">
    <source>
        <dbReference type="EMBL" id="AFP38349.1"/>
    </source>
</evidence>
<organism>
    <name type="scientific">Mycolicibacterium smegmatis (strain ATCC 700084 / mc(2)155)</name>
    <name type="common">Mycobacterium smegmatis</name>
    <dbReference type="NCBI Taxonomy" id="246196"/>
    <lineage>
        <taxon>Bacteria</taxon>
        <taxon>Bacillati</taxon>
        <taxon>Actinomycetota</taxon>
        <taxon>Actinomycetes</taxon>
        <taxon>Mycobacteriales</taxon>
        <taxon>Mycobacteriaceae</taxon>
        <taxon>Mycolicibacterium</taxon>
    </lineage>
</organism>
<sequence length="499" mass="53695">MSTLGDLLAEHTMLPGSAVDHLHAVVGEWQMLSDLSFADYLMWVRRDDGVLVCVAQIRPNTAPTVLLADSVGKLAGPDDLPVVTMAFESGAIGRGSDKAGQGSRTRPGLDVEAVPVRHQGQVVAVLTHQTALAERRLTSPLEGAYLDCANDLLHMLAEGTFPNIGDLAMSRSSPRVGDGFIRLNEGGEVVFASPNAISAYHRMGLNSELDGHNLVAITRPLISDPFEAQELANHIRDSLAGGSSMRMEVDANGAAILLRTLPLVAGGKSLGAAVLIRDVTEVKRRDRALLSKDATIREIHHRVKNNLQTVAALLRLQARRTSNEEAREALIESVRRVTSIALVHDALSMSVDEEVNLDQVVDRILPIMNDVASVDTPIRINRVGNLGVLDADRATALIMVITELVQNAIEHAFDAKTEQGCVTIKAERSARWLDVVVHDDGRGLPVGFSLEKSDRLGLQIVRTLVTAELDGSLGMHDVPSGGTDVVLRVPIGRRSRGAQ</sequence>
<accession>A0QTP6</accession>
<accession>I7G6R9</accession>
<gene>
    <name evidence="6" type="primary">pdtaS</name>
    <name evidence="8" type="ordered locus">MSMEG_1918</name>
    <name evidence="9" type="ordered locus">MSMEI_1877</name>
</gene>
<name>PDTAS_MYCS2</name>
<comment type="function">
    <text evidence="1">Member of the two-component regulatory system PdtaR/PdtaS. This two-component system plays an essential role in mycobacterial adaptation to poor nutrient conditions. Nutrient deprivation results in increasing intracellular concentrations of cyclic diguanosine monophosphate (c-di-GMP), which binds to the PdtaS sensor and promotes its autophosphorylation, leading to the activation of the signaling cascade. The phosphate group is then transferred to PdtaR.</text>
</comment>
<comment type="catalytic activity">
    <reaction evidence="1">
        <text>ATP + protein L-histidine = ADP + protein N-phospho-L-histidine.</text>
        <dbReference type="EC" id="2.7.13.3"/>
    </reaction>
</comment>
<comment type="subcellular location">
    <subcellularLocation>
        <location evidence="1">Cytoplasm</location>
    </subcellularLocation>
</comment>
<comment type="PTM">
    <text evidence="1">Autophosphorylated.</text>
</comment>
<comment type="disruption phenotype">
    <text evidence="4 5">Knockout mutant is severely compromised in growth on amino acid deficient media and exhibits global transcriptional dysregulation of biosynthesis and transmembrane transport, leading to a loss of lipids and increased membrane permeability (PubMed:33772870). Disruption mutant is more sensitive to the wide range of aminoglycosides (kanamycin, apramycin, sisomicin, streptomycin and dihydrostreptomycin), but is more resistant to tetracycline antibiotics (tetracycline and penimepicycline), drugs affecting 30S subunit of ribosomes (PubMed:29163430). Disruption also affects respiration and electron transport (PubMed:29163430). The rRNA expression levels are not affected (PubMed:29163430). Does not affect growth and survival in a nutrient-rich medium (PubMed:29163430, PubMed:33772870).</text>
</comment>
<reference key="1">
    <citation type="submission" date="2006-10" db="EMBL/GenBank/DDBJ databases">
        <authorList>
            <person name="Fleischmann R.D."/>
            <person name="Dodson R.J."/>
            <person name="Haft D.H."/>
            <person name="Merkel J.S."/>
            <person name="Nelson W.C."/>
            <person name="Fraser C.M."/>
        </authorList>
    </citation>
    <scope>NUCLEOTIDE SEQUENCE [LARGE SCALE GENOMIC DNA]</scope>
    <source>
        <strain>ATCC 700084 / mc(2)155</strain>
    </source>
</reference>
<reference key="2">
    <citation type="journal article" date="2007" name="Genome Biol.">
        <title>Interrupted coding sequences in Mycobacterium smegmatis: authentic mutations or sequencing errors?</title>
        <authorList>
            <person name="Deshayes C."/>
            <person name="Perrodou E."/>
            <person name="Gallien S."/>
            <person name="Euphrasie D."/>
            <person name="Schaeffer C."/>
            <person name="Van-Dorsselaer A."/>
            <person name="Poch O."/>
            <person name="Lecompte O."/>
            <person name="Reyrat J.-M."/>
        </authorList>
    </citation>
    <scope>NUCLEOTIDE SEQUENCE [LARGE SCALE GENOMIC DNA]</scope>
    <source>
        <strain>ATCC 700084 / mc(2)155</strain>
    </source>
</reference>
<reference key="3">
    <citation type="journal article" date="2009" name="Genome Res.">
        <title>Ortho-proteogenomics: multiple proteomes investigation through orthology and a new MS-based protocol.</title>
        <authorList>
            <person name="Gallien S."/>
            <person name="Perrodou E."/>
            <person name="Carapito C."/>
            <person name="Deshayes C."/>
            <person name="Reyrat J.-M."/>
            <person name="Van Dorsselaer A."/>
            <person name="Poch O."/>
            <person name="Schaeffer C."/>
            <person name="Lecompte O."/>
        </authorList>
    </citation>
    <scope>NUCLEOTIDE SEQUENCE [LARGE SCALE GENOMIC DNA]</scope>
    <source>
        <strain>ATCC 700084 / mc(2)155</strain>
    </source>
</reference>
<reference key="4">
    <citation type="journal article" date="2017" name="Front. Microbiol.">
        <title>PdtaS deficiency affects resistance of mycobacteria to ribosome targeting antibiotics.</title>
        <authorList>
            <person name="Dadura K."/>
            <person name="Plocinska R."/>
            <person name="Rumijowska-Galewicz A."/>
            <person name="Plocinski P."/>
            <person name="Zaczek A."/>
            <person name="Dziadek B."/>
            <person name="Zaborowski A."/>
            <person name="Dziadek J."/>
        </authorList>
    </citation>
    <scope>DISRUPTION PHENOTYPE</scope>
    <source>
        <strain>ATCC 700084 / mc(2)155</strain>
    </source>
</reference>
<reference key="5">
    <citation type="journal article" date="2021" name="FASEB J.">
        <title>Cyclic di-GMP sensing histidine kinase PdtaS controls mycobacterial adaptation to carbon sources.</title>
        <authorList>
            <person name="Hariharan V.N."/>
            <person name="Yadav R."/>
            <person name="Thakur C."/>
            <person name="Singh A."/>
            <person name="Gopinathan R."/>
            <person name="Singh D.P."/>
            <person name="Sankhe G."/>
            <person name="Malhotra V."/>
            <person name="Chandra N."/>
            <person name="Bhatt A."/>
            <person name="Saini D.K."/>
        </authorList>
    </citation>
    <scope>DISRUPTION PHENOTYPE</scope>
    <source>
        <strain>ATCC 700084 / mc(2)155</strain>
    </source>
</reference>
<protein>
    <recommendedName>
        <fullName evidence="1">Sensor histidine kinase PdtaS</fullName>
        <ecNumber evidence="1">2.7.13.3</ecNumber>
    </recommendedName>
</protein>
<feature type="chain" id="PRO_0000457479" description="Sensor histidine kinase PdtaS">
    <location>
        <begin position="1"/>
        <end position="499"/>
    </location>
</feature>
<feature type="domain" description="Histidine kinase" evidence="3">
    <location>
        <begin position="298"/>
        <end position="493"/>
    </location>
</feature>
<feature type="region of interest" description="GAF" evidence="2">
    <location>
        <begin position="4"/>
        <end position="149"/>
    </location>
</feature>
<feature type="region of interest" description="PAS-like" evidence="7">
    <location>
        <begin position="178"/>
        <end position="289"/>
    </location>
</feature>
<feature type="modified residue" description="Phosphohistidine; by autocatalysis" evidence="3">
    <location>
        <position position="301"/>
    </location>
</feature>
<dbReference type="EC" id="2.7.13.3" evidence="1"/>
<dbReference type="EMBL" id="CP000480">
    <property type="protein sequence ID" value="ABK70703.1"/>
    <property type="molecule type" value="Genomic_DNA"/>
</dbReference>
<dbReference type="EMBL" id="CP001663">
    <property type="protein sequence ID" value="AFP38349.1"/>
    <property type="molecule type" value="Genomic_DNA"/>
</dbReference>
<dbReference type="RefSeq" id="WP_011728009.1">
    <property type="nucleotide sequence ID" value="NZ_SIJM01000020.1"/>
</dbReference>
<dbReference type="RefSeq" id="YP_886284.1">
    <property type="nucleotide sequence ID" value="NC_008596.1"/>
</dbReference>
<dbReference type="SMR" id="A0QTP6"/>
<dbReference type="STRING" id="246196.MSMEG_1918"/>
<dbReference type="PaxDb" id="246196-MSMEI_1877"/>
<dbReference type="KEGG" id="msb:LJ00_09575"/>
<dbReference type="KEGG" id="msg:MSMEI_1877"/>
<dbReference type="KEGG" id="msm:MSMEG_1918"/>
<dbReference type="PATRIC" id="fig|246196.19.peg.1899"/>
<dbReference type="eggNOG" id="COG3920">
    <property type="taxonomic scope" value="Bacteria"/>
</dbReference>
<dbReference type="OrthoDB" id="9767435at2"/>
<dbReference type="Proteomes" id="UP000000757">
    <property type="component" value="Chromosome"/>
</dbReference>
<dbReference type="Proteomes" id="UP000006158">
    <property type="component" value="Chromosome"/>
</dbReference>
<dbReference type="GO" id="GO:0005737">
    <property type="term" value="C:cytoplasm"/>
    <property type="evidence" value="ECO:0007669"/>
    <property type="project" value="UniProtKB-SubCell"/>
</dbReference>
<dbReference type="GO" id="GO:0005524">
    <property type="term" value="F:ATP binding"/>
    <property type="evidence" value="ECO:0007669"/>
    <property type="project" value="UniProtKB-KW"/>
</dbReference>
<dbReference type="GO" id="GO:0004673">
    <property type="term" value="F:protein histidine kinase activity"/>
    <property type="evidence" value="ECO:0007669"/>
    <property type="project" value="InterPro"/>
</dbReference>
<dbReference type="GO" id="GO:0000160">
    <property type="term" value="P:phosphorelay signal transduction system"/>
    <property type="evidence" value="ECO:0007669"/>
    <property type="project" value="UniProtKB-KW"/>
</dbReference>
<dbReference type="Gene3D" id="3.30.450.280">
    <property type="entry name" value="GAF domain"/>
    <property type="match status" value="1"/>
</dbReference>
<dbReference type="Gene3D" id="3.30.565.10">
    <property type="entry name" value="Histidine kinase-like ATPase, C-terminal domain"/>
    <property type="match status" value="1"/>
</dbReference>
<dbReference type="Gene3D" id="3.30.450.20">
    <property type="entry name" value="PAS domain"/>
    <property type="match status" value="1"/>
</dbReference>
<dbReference type="InterPro" id="IPR038424">
    <property type="entry name" value="H_kinase_PdtaS_GAF_sf"/>
</dbReference>
<dbReference type="InterPro" id="IPR036890">
    <property type="entry name" value="HATPase_C_sf"/>
</dbReference>
<dbReference type="InterPro" id="IPR005467">
    <property type="entry name" value="His_kinase_dom"/>
</dbReference>
<dbReference type="InterPro" id="IPR022066">
    <property type="entry name" value="PdtaS_GAF"/>
</dbReference>
<dbReference type="InterPro" id="IPR011495">
    <property type="entry name" value="Sig_transdc_His_kin_sub2_dim/P"/>
</dbReference>
<dbReference type="InterPro" id="IPR011102">
    <property type="entry name" value="Sig_transdc_His_kinase_HWE"/>
</dbReference>
<dbReference type="PANTHER" id="PTHR41523:SF8">
    <property type="entry name" value="ETHYLENE RESPONSE SENSOR PROTEIN"/>
    <property type="match status" value="1"/>
</dbReference>
<dbReference type="PANTHER" id="PTHR41523">
    <property type="entry name" value="TWO-COMPONENT SYSTEM SENSOR PROTEIN"/>
    <property type="match status" value="1"/>
</dbReference>
<dbReference type="Pfam" id="PF12282">
    <property type="entry name" value="GAF_PdtaS"/>
    <property type="match status" value="1"/>
</dbReference>
<dbReference type="Pfam" id="PF02518">
    <property type="entry name" value="HATPase_c"/>
    <property type="match status" value="1"/>
</dbReference>
<dbReference type="Pfam" id="PF07568">
    <property type="entry name" value="HisKA_2"/>
    <property type="match status" value="1"/>
</dbReference>
<dbReference type="SMART" id="SM00387">
    <property type="entry name" value="HATPase_c"/>
    <property type="match status" value="1"/>
</dbReference>
<dbReference type="SMART" id="SM00911">
    <property type="entry name" value="HWE_HK"/>
    <property type="match status" value="1"/>
</dbReference>
<dbReference type="SUPFAM" id="SSF55874">
    <property type="entry name" value="ATPase domain of HSP90 chaperone/DNA topoisomerase II/histidine kinase"/>
    <property type="match status" value="1"/>
</dbReference>
<dbReference type="PROSITE" id="PS50109">
    <property type="entry name" value="HIS_KIN"/>
    <property type="match status" value="1"/>
</dbReference>
<keyword id="KW-0067">ATP-binding</keyword>
<keyword id="KW-0963">Cytoplasm</keyword>
<keyword id="KW-0418">Kinase</keyword>
<keyword id="KW-0547">Nucleotide-binding</keyword>
<keyword id="KW-0597">Phosphoprotein</keyword>
<keyword id="KW-1185">Reference proteome</keyword>
<keyword id="KW-0346">Stress response</keyword>
<keyword id="KW-0808">Transferase</keyword>
<keyword id="KW-0902">Two-component regulatory system</keyword>
<proteinExistence type="inferred from homology"/>